<comment type="function">
    <text evidence="1">Involved in peptide bond synthesis. Alleviates ribosome stalling that occurs when 3 or more consecutive Pro residues or the sequence PPG is present in a protein, possibly by augmenting the peptidyl transferase activity of the ribosome. Modification of Lys-34 is required for alleviation.</text>
</comment>
<comment type="pathway">
    <text evidence="1">Protein biosynthesis; polypeptide chain elongation.</text>
</comment>
<comment type="subcellular location">
    <subcellularLocation>
        <location evidence="1">Cytoplasm</location>
    </subcellularLocation>
</comment>
<comment type="PTM">
    <text evidence="1">Is beta-lysylated on the epsilon-amino group of Lys-34 by the combined action of EpmA and EpmB, and then hydroxylated on the C5 position of the same residue by EpmC. Lysylation is critical for the stimulatory effect of EF-P on peptide-bond formation. The lysylation moiety would extend toward the peptidyltransferase center and stabilize the terminal 3-CCA end of the tRNA. The hydroxylation of the C5 position on Lys-34 would allow additional potential stabilizing hydrogen-bond interactions with the P-tRNA.</text>
</comment>
<comment type="similarity">
    <text evidence="1">Belongs to the elongation factor P family.</text>
</comment>
<feature type="chain" id="PRO_1000096198" description="Elongation factor P">
    <location>
        <begin position="1"/>
        <end position="188"/>
    </location>
</feature>
<feature type="modified residue" description="N6-(3,6-diaminohexanoyl)-5-hydroxylysine" evidence="1">
    <location>
        <position position="34"/>
    </location>
</feature>
<accession>B5FRK6</accession>
<keyword id="KW-0963">Cytoplasm</keyword>
<keyword id="KW-0251">Elongation factor</keyword>
<keyword id="KW-0379">Hydroxylation</keyword>
<keyword id="KW-0648">Protein biosynthesis</keyword>
<reference key="1">
    <citation type="journal article" date="2011" name="J. Bacteriol.">
        <title>Comparative genomics of 28 Salmonella enterica isolates: evidence for CRISPR-mediated adaptive sublineage evolution.</title>
        <authorList>
            <person name="Fricke W.F."/>
            <person name="Mammel M.K."/>
            <person name="McDermott P.F."/>
            <person name="Tartera C."/>
            <person name="White D.G."/>
            <person name="Leclerc J.E."/>
            <person name="Ravel J."/>
            <person name="Cebula T.A."/>
        </authorList>
    </citation>
    <scope>NUCLEOTIDE SEQUENCE [LARGE SCALE GENOMIC DNA]</scope>
    <source>
        <strain>CT_02021853</strain>
    </source>
</reference>
<dbReference type="EMBL" id="CP001144">
    <property type="protein sequence ID" value="ACH73889.1"/>
    <property type="molecule type" value="Genomic_DNA"/>
</dbReference>
<dbReference type="RefSeq" id="WP_000257282.1">
    <property type="nucleotide sequence ID" value="NC_011205.1"/>
</dbReference>
<dbReference type="SMR" id="B5FRK6"/>
<dbReference type="GeneID" id="66758562"/>
<dbReference type="KEGG" id="sed:SeD_A4731"/>
<dbReference type="HOGENOM" id="CLU_074944_0_0_6"/>
<dbReference type="UniPathway" id="UPA00345"/>
<dbReference type="Proteomes" id="UP000008322">
    <property type="component" value="Chromosome"/>
</dbReference>
<dbReference type="GO" id="GO:0005829">
    <property type="term" value="C:cytosol"/>
    <property type="evidence" value="ECO:0007669"/>
    <property type="project" value="UniProtKB-ARBA"/>
</dbReference>
<dbReference type="GO" id="GO:0003746">
    <property type="term" value="F:translation elongation factor activity"/>
    <property type="evidence" value="ECO:0007669"/>
    <property type="project" value="UniProtKB-UniRule"/>
</dbReference>
<dbReference type="GO" id="GO:0043043">
    <property type="term" value="P:peptide biosynthetic process"/>
    <property type="evidence" value="ECO:0007669"/>
    <property type="project" value="InterPro"/>
</dbReference>
<dbReference type="CDD" id="cd04470">
    <property type="entry name" value="S1_EF-P_repeat_1"/>
    <property type="match status" value="1"/>
</dbReference>
<dbReference type="CDD" id="cd05794">
    <property type="entry name" value="S1_EF-P_repeat_2"/>
    <property type="match status" value="1"/>
</dbReference>
<dbReference type="FunFam" id="2.30.30.30:FF:000003">
    <property type="entry name" value="Elongation factor P"/>
    <property type="match status" value="1"/>
</dbReference>
<dbReference type="FunFam" id="2.40.50.140:FF:000004">
    <property type="entry name" value="Elongation factor P"/>
    <property type="match status" value="1"/>
</dbReference>
<dbReference type="FunFam" id="2.40.50.140:FF:000009">
    <property type="entry name" value="Elongation factor P"/>
    <property type="match status" value="1"/>
</dbReference>
<dbReference type="Gene3D" id="2.30.30.30">
    <property type="match status" value="1"/>
</dbReference>
<dbReference type="Gene3D" id="2.40.50.140">
    <property type="entry name" value="Nucleic acid-binding proteins"/>
    <property type="match status" value="2"/>
</dbReference>
<dbReference type="HAMAP" id="MF_00141">
    <property type="entry name" value="EF_P"/>
    <property type="match status" value="1"/>
</dbReference>
<dbReference type="InterPro" id="IPR015365">
    <property type="entry name" value="Elong-fact-P_C"/>
</dbReference>
<dbReference type="InterPro" id="IPR012340">
    <property type="entry name" value="NA-bd_OB-fold"/>
</dbReference>
<dbReference type="InterPro" id="IPR014722">
    <property type="entry name" value="Rib_uL2_dom2"/>
</dbReference>
<dbReference type="InterPro" id="IPR020599">
    <property type="entry name" value="Transl_elong_fac_P/YeiP"/>
</dbReference>
<dbReference type="InterPro" id="IPR013185">
    <property type="entry name" value="Transl_elong_KOW-like"/>
</dbReference>
<dbReference type="InterPro" id="IPR001059">
    <property type="entry name" value="Transl_elong_P/YeiP_cen"/>
</dbReference>
<dbReference type="InterPro" id="IPR013852">
    <property type="entry name" value="Transl_elong_P/YeiP_CS"/>
</dbReference>
<dbReference type="InterPro" id="IPR011768">
    <property type="entry name" value="Transl_elongation_fac_P"/>
</dbReference>
<dbReference type="InterPro" id="IPR008991">
    <property type="entry name" value="Translation_prot_SH3-like_sf"/>
</dbReference>
<dbReference type="NCBIfam" id="TIGR00038">
    <property type="entry name" value="efp"/>
    <property type="match status" value="1"/>
</dbReference>
<dbReference type="NCBIfam" id="NF001810">
    <property type="entry name" value="PRK00529.1"/>
    <property type="match status" value="1"/>
</dbReference>
<dbReference type="PANTHER" id="PTHR30053">
    <property type="entry name" value="ELONGATION FACTOR P"/>
    <property type="match status" value="1"/>
</dbReference>
<dbReference type="PANTHER" id="PTHR30053:SF12">
    <property type="entry name" value="ELONGATION FACTOR P (EF-P) FAMILY PROTEIN"/>
    <property type="match status" value="1"/>
</dbReference>
<dbReference type="Pfam" id="PF01132">
    <property type="entry name" value="EFP"/>
    <property type="match status" value="1"/>
</dbReference>
<dbReference type="Pfam" id="PF08207">
    <property type="entry name" value="EFP_N"/>
    <property type="match status" value="1"/>
</dbReference>
<dbReference type="Pfam" id="PF09285">
    <property type="entry name" value="Elong-fact-P_C"/>
    <property type="match status" value="1"/>
</dbReference>
<dbReference type="PIRSF" id="PIRSF005901">
    <property type="entry name" value="EF-P"/>
    <property type="match status" value="1"/>
</dbReference>
<dbReference type="SMART" id="SM01185">
    <property type="entry name" value="EFP"/>
    <property type="match status" value="1"/>
</dbReference>
<dbReference type="SMART" id="SM00841">
    <property type="entry name" value="Elong-fact-P_C"/>
    <property type="match status" value="1"/>
</dbReference>
<dbReference type="SUPFAM" id="SSF50249">
    <property type="entry name" value="Nucleic acid-binding proteins"/>
    <property type="match status" value="2"/>
</dbReference>
<dbReference type="SUPFAM" id="SSF50104">
    <property type="entry name" value="Translation proteins SH3-like domain"/>
    <property type="match status" value="1"/>
</dbReference>
<dbReference type="PROSITE" id="PS01275">
    <property type="entry name" value="EFP"/>
    <property type="match status" value="1"/>
</dbReference>
<protein>
    <recommendedName>
        <fullName evidence="1">Elongation factor P</fullName>
        <shortName evidence="1">EF-P</shortName>
    </recommendedName>
</protein>
<gene>
    <name evidence="1" type="primary">efp</name>
    <name type="ordered locus">SeD_A4731</name>
</gene>
<name>EFP_SALDC</name>
<sequence length="188" mass="20623">MATYYSNDFRSGLKIMLDGEPYAVESSEFVKPGKGQAFARVKLRRLLTGTRVEKTFKSTDSAEGADVVDMNLTYLYNDGEFWHFMNNETFEQLSADAKAIGDNAKWLLDQAECIVTLWNGQPISVTPPNFVELEIVDTDPGLKGDTAGTGGKPATLSTGAVVKVPLFVQIGEVIKVDTRSGEYVSRVK</sequence>
<proteinExistence type="inferred from homology"/>
<organism>
    <name type="scientific">Salmonella dublin (strain CT_02021853)</name>
    <dbReference type="NCBI Taxonomy" id="439851"/>
    <lineage>
        <taxon>Bacteria</taxon>
        <taxon>Pseudomonadati</taxon>
        <taxon>Pseudomonadota</taxon>
        <taxon>Gammaproteobacteria</taxon>
        <taxon>Enterobacterales</taxon>
        <taxon>Enterobacteriaceae</taxon>
        <taxon>Salmonella</taxon>
    </lineage>
</organism>
<evidence type="ECO:0000255" key="1">
    <source>
        <dbReference type="HAMAP-Rule" id="MF_00141"/>
    </source>
</evidence>